<sequence>MTTAPPPLSVLLELTHRCPLACPYCSNPIALAALREEMDTAGWRSLLEQAAEMGVLQAHFSGGEPMLRKDLPELVAHARTLGLYSNLITSGVAGGEPMLDQLQAAGLEHVQLSVQDVDPAGADRIAGYRNSLPKKRDFAAAVRARGLPLTINAVLHRHNAERVPGMIALALEWQAERIEVAHTQYYGWGLRNRAALMPSREQLMATIDAVDTARRELGDSLAIDFVTPDYYARQPKPCMGGWGQRFVNISPRGDVLPCHAAETIEGMRFDNLRERALADIWNNGEAFVRFRGTAWMPEVCQGCPKREIDWGGCRCQALALSGNAATLDPVCERSPAHAQVRATAEREAAAPAPEFIYRRPERPAPATADTLE</sequence>
<organism>
    <name type="scientific">Xanthomonas oryzae pv. oryzae (strain KACC10331 / KXO85)</name>
    <dbReference type="NCBI Taxonomy" id="291331"/>
    <lineage>
        <taxon>Bacteria</taxon>
        <taxon>Pseudomonadati</taxon>
        <taxon>Pseudomonadota</taxon>
        <taxon>Gammaproteobacteria</taxon>
        <taxon>Lysobacterales</taxon>
        <taxon>Lysobacteraceae</taxon>
        <taxon>Xanthomonas</taxon>
    </lineage>
</organism>
<keyword id="KW-0004">4Fe-4S</keyword>
<keyword id="KW-0408">Iron</keyword>
<keyword id="KW-0411">Iron-sulfur</keyword>
<keyword id="KW-0479">Metal-binding</keyword>
<keyword id="KW-0560">Oxidoreductase</keyword>
<keyword id="KW-0884">PQQ biosynthesis</keyword>
<keyword id="KW-1185">Reference proteome</keyword>
<keyword id="KW-0949">S-adenosyl-L-methionine</keyword>
<reference key="1">
    <citation type="journal article" date="2005" name="Nucleic Acids Res.">
        <title>The genome sequence of Xanthomonas oryzae pathovar oryzae KACC10331, the bacterial blight pathogen of rice.</title>
        <authorList>
            <person name="Lee B.-M."/>
            <person name="Park Y.-J."/>
            <person name="Park D.-S."/>
            <person name="Kang H.-W."/>
            <person name="Kim J.-G."/>
            <person name="Song E.-S."/>
            <person name="Park I.-C."/>
            <person name="Yoon U.-H."/>
            <person name="Hahn J.-H."/>
            <person name="Koo B.-S."/>
            <person name="Lee G.-B."/>
            <person name="Kim H."/>
            <person name="Park H.-S."/>
            <person name="Yoon K.-O."/>
            <person name="Kim J.-H."/>
            <person name="Jung C.-H."/>
            <person name="Koh N.-H."/>
            <person name="Seo J.-S."/>
            <person name="Go S.-J."/>
        </authorList>
    </citation>
    <scope>NUCLEOTIDE SEQUENCE [LARGE SCALE GENOMIC DNA]</scope>
    <source>
        <strain>KACC10331 / KXO85</strain>
    </source>
</reference>
<accession>Q5H234</accession>
<evidence type="ECO:0000255" key="1">
    <source>
        <dbReference type="HAMAP-Rule" id="MF_00660"/>
    </source>
</evidence>
<evidence type="ECO:0000255" key="2">
    <source>
        <dbReference type="PROSITE-ProRule" id="PRU01266"/>
    </source>
</evidence>
<evidence type="ECO:0000256" key="3">
    <source>
        <dbReference type="SAM" id="MobiDB-lite"/>
    </source>
</evidence>
<evidence type="ECO:0000305" key="4"/>
<feature type="chain" id="PRO_0000219957" description="PqqA peptide cyclase">
    <location>
        <begin position="1"/>
        <end position="372"/>
    </location>
</feature>
<feature type="domain" description="Radical SAM core" evidence="2">
    <location>
        <begin position="4"/>
        <end position="219"/>
    </location>
</feature>
<feature type="region of interest" description="Disordered" evidence="3">
    <location>
        <begin position="342"/>
        <end position="372"/>
    </location>
</feature>
<feature type="binding site" evidence="1">
    <location>
        <position position="18"/>
    </location>
    <ligand>
        <name>[4Fe-4S] cluster</name>
        <dbReference type="ChEBI" id="CHEBI:49883"/>
        <note>4Fe-4S-S-AdoMet</note>
    </ligand>
</feature>
<feature type="binding site" evidence="1">
    <location>
        <position position="22"/>
    </location>
    <ligand>
        <name>[4Fe-4S] cluster</name>
        <dbReference type="ChEBI" id="CHEBI:49883"/>
        <note>4Fe-4S-S-AdoMet</note>
    </ligand>
</feature>
<feature type="binding site" evidence="1">
    <location>
        <position position="25"/>
    </location>
    <ligand>
        <name>[4Fe-4S] cluster</name>
        <dbReference type="ChEBI" id="CHEBI:49883"/>
        <note>4Fe-4S-S-AdoMet</note>
    </ligand>
</feature>
<dbReference type="EC" id="1.21.98.4" evidence="1"/>
<dbReference type="EMBL" id="AE013598">
    <property type="protein sequence ID" value="AAW74987.1"/>
    <property type="status" value="ALT_INIT"/>
    <property type="molecule type" value="Genomic_DNA"/>
</dbReference>
<dbReference type="SMR" id="Q5H234"/>
<dbReference type="STRING" id="291331.XOO1733"/>
<dbReference type="KEGG" id="xoo:XOO1733"/>
<dbReference type="PATRIC" id="fig|291331.8.peg.1931"/>
<dbReference type="HOGENOM" id="CLU_009273_4_7_6"/>
<dbReference type="UniPathway" id="UPA00539"/>
<dbReference type="Proteomes" id="UP000006735">
    <property type="component" value="Chromosome"/>
</dbReference>
<dbReference type="GO" id="GO:0051539">
    <property type="term" value="F:4 iron, 4 sulfur cluster binding"/>
    <property type="evidence" value="ECO:0007669"/>
    <property type="project" value="UniProtKB-KW"/>
</dbReference>
<dbReference type="GO" id="GO:0009975">
    <property type="term" value="F:cyclase activity"/>
    <property type="evidence" value="ECO:0007669"/>
    <property type="project" value="UniProtKB-UniRule"/>
</dbReference>
<dbReference type="GO" id="GO:0005506">
    <property type="term" value="F:iron ion binding"/>
    <property type="evidence" value="ECO:0007669"/>
    <property type="project" value="UniProtKB-UniRule"/>
</dbReference>
<dbReference type="GO" id="GO:0016491">
    <property type="term" value="F:oxidoreductase activity"/>
    <property type="evidence" value="ECO:0007669"/>
    <property type="project" value="UniProtKB-KW"/>
</dbReference>
<dbReference type="GO" id="GO:1904047">
    <property type="term" value="F:S-adenosyl-L-methionine binding"/>
    <property type="evidence" value="ECO:0007669"/>
    <property type="project" value="UniProtKB-UniRule"/>
</dbReference>
<dbReference type="GO" id="GO:0018189">
    <property type="term" value="P:pyrroloquinoline quinone biosynthetic process"/>
    <property type="evidence" value="ECO:0007669"/>
    <property type="project" value="UniProtKB-UniRule"/>
</dbReference>
<dbReference type="CDD" id="cd01335">
    <property type="entry name" value="Radical_SAM"/>
    <property type="match status" value="1"/>
</dbReference>
<dbReference type="CDD" id="cd21119">
    <property type="entry name" value="SPASM_PqqE"/>
    <property type="match status" value="1"/>
</dbReference>
<dbReference type="Gene3D" id="3.20.20.70">
    <property type="entry name" value="Aldolase class I"/>
    <property type="match status" value="1"/>
</dbReference>
<dbReference type="HAMAP" id="MF_00660">
    <property type="entry name" value="PqqE"/>
    <property type="match status" value="1"/>
</dbReference>
<dbReference type="InterPro" id="IPR023885">
    <property type="entry name" value="4Fe4S-binding_SPASM_dom"/>
</dbReference>
<dbReference type="InterPro" id="IPR013785">
    <property type="entry name" value="Aldolase_TIM"/>
</dbReference>
<dbReference type="InterPro" id="IPR011843">
    <property type="entry name" value="PQQ_synth_PqqE_bac"/>
</dbReference>
<dbReference type="InterPro" id="IPR017200">
    <property type="entry name" value="PqqE-like"/>
</dbReference>
<dbReference type="InterPro" id="IPR050377">
    <property type="entry name" value="Radical_SAM_PqqE_MftC-like"/>
</dbReference>
<dbReference type="InterPro" id="IPR007197">
    <property type="entry name" value="rSAM"/>
</dbReference>
<dbReference type="NCBIfam" id="TIGR02109">
    <property type="entry name" value="PQQ_syn_pqqE"/>
    <property type="match status" value="1"/>
</dbReference>
<dbReference type="NCBIfam" id="TIGR04085">
    <property type="entry name" value="rSAM_more_4Fe4S"/>
    <property type="match status" value="1"/>
</dbReference>
<dbReference type="PANTHER" id="PTHR11228:SF7">
    <property type="entry name" value="PQQA PEPTIDE CYCLASE"/>
    <property type="match status" value="1"/>
</dbReference>
<dbReference type="PANTHER" id="PTHR11228">
    <property type="entry name" value="RADICAL SAM DOMAIN PROTEIN"/>
    <property type="match status" value="1"/>
</dbReference>
<dbReference type="Pfam" id="PF04055">
    <property type="entry name" value="Radical_SAM"/>
    <property type="match status" value="1"/>
</dbReference>
<dbReference type="Pfam" id="PF13186">
    <property type="entry name" value="SPASM"/>
    <property type="match status" value="1"/>
</dbReference>
<dbReference type="PIRSF" id="PIRSF037420">
    <property type="entry name" value="PQQ_syn_pqqE"/>
    <property type="match status" value="1"/>
</dbReference>
<dbReference type="SFLD" id="SFLDF00280">
    <property type="entry name" value="coenzyme_PQQ_synthesis_protein"/>
    <property type="match status" value="1"/>
</dbReference>
<dbReference type="SFLD" id="SFLDS00029">
    <property type="entry name" value="Radical_SAM"/>
    <property type="match status" value="1"/>
</dbReference>
<dbReference type="SUPFAM" id="SSF102114">
    <property type="entry name" value="Radical SAM enzymes"/>
    <property type="match status" value="1"/>
</dbReference>
<dbReference type="PROSITE" id="PS51918">
    <property type="entry name" value="RADICAL_SAM"/>
    <property type="match status" value="1"/>
</dbReference>
<comment type="function">
    <text evidence="1">Catalyzes the cross-linking of a glutamate residue and a tyrosine residue in the PqqA protein as part of the biosynthesis of pyrroloquinoline quinone (PQQ).</text>
</comment>
<comment type="catalytic activity">
    <reaction evidence="1">
        <text>[PQQ precursor protein] + S-adenosyl-L-methionine = E-Y cross-linked-[PQQ precursor protein] + 5'-deoxyadenosine + L-methionine + H(+)</text>
        <dbReference type="Rhea" id="RHEA:56836"/>
        <dbReference type="Rhea" id="RHEA-COMP:14800"/>
        <dbReference type="Rhea" id="RHEA-COMP:14801"/>
        <dbReference type="ChEBI" id="CHEBI:15378"/>
        <dbReference type="ChEBI" id="CHEBI:17319"/>
        <dbReference type="ChEBI" id="CHEBI:57844"/>
        <dbReference type="ChEBI" id="CHEBI:59789"/>
        <dbReference type="ChEBI" id="CHEBI:141026"/>
        <dbReference type="ChEBI" id="CHEBI:141027"/>
        <dbReference type="EC" id="1.21.98.4"/>
    </reaction>
</comment>
<comment type="cofactor">
    <cofactor evidence="1">
        <name>[4Fe-4S] cluster</name>
        <dbReference type="ChEBI" id="CHEBI:49883"/>
    </cofactor>
    <text evidence="1">Binds 1 [4Fe-4S] cluster. The cluster is coordinated with 3 cysteines and an exchangeable S-adenosyl-L-methionine.</text>
</comment>
<comment type="pathway">
    <text evidence="1">Cofactor biosynthesis; pyrroloquinoline quinone biosynthesis.</text>
</comment>
<comment type="subunit">
    <text evidence="1">Interacts with PqqD. The interaction is necessary for activity of PqqE.</text>
</comment>
<comment type="similarity">
    <text evidence="1">Belongs to the radical SAM superfamily. PqqE family.</text>
</comment>
<comment type="sequence caution" evidence="4">
    <conflict type="erroneous initiation">
        <sequence resource="EMBL-CDS" id="AAW74987"/>
    </conflict>
</comment>
<name>PQQE_XANOR</name>
<protein>
    <recommendedName>
        <fullName evidence="1">PqqA peptide cyclase</fullName>
        <ecNumber evidence="1">1.21.98.4</ecNumber>
    </recommendedName>
    <alternativeName>
        <fullName evidence="1">Coenzyme PQQ synthesis protein E</fullName>
    </alternativeName>
    <alternativeName>
        <fullName evidence="1">Pyrroloquinoline quinone biosynthesis protein E</fullName>
    </alternativeName>
</protein>
<gene>
    <name evidence="1" type="primary">pqqE</name>
    <name type="ordered locus">XOO1733</name>
</gene>
<proteinExistence type="inferred from homology"/>